<evidence type="ECO:0000255" key="1">
    <source>
        <dbReference type="HAMAP-Rule" id="MF_01366"/>
    </source>
</evidence>
<evidence type="ECO:0000305" key="2"/>
<proteinExistence type="inferred from homology"/>
<organism>
    <name type="scientific">Cyanothece sp. (strain PCC 7425 / ATCC 29141)</name>
    <dbReference type="NCBI Taxonomy" id="395961"/>
    <lineage>
        <taxon>Bacteria</taxon>
        <taxon>Bacillati</taxon>
        <taxon>Cyanobacteriota</taxon>
        <taxon>Cyanophyceae</taxon>
        <taxon>Gomontiellales</taxon>
        <taxon>Cyanothecaceae</taxon>
        <taxon>Cyanothece</taxon>
    </lineage>
</organism>
<accession>B8HMT1</accession>
<name>RL13_CYAP4</name>
<sequence>MNKTYLPSTTSLEPKWYVVDATEQHLGRLATQIAMILRGKTKPIYTPSMDTGDFVIVVNAEKVAVTGKKRTQKIYRRHSGRPGGMKTETFAKLQSRLPERIIEHAVKGMLPKNTLGRNLFTKLKVYAGPDHPHQAQKPEVLTLKTIAGA</sequence>
<feature type="chain" id="PRO_1000166863" description="Large ribosomal subunit protein uL13">
    <location>
        <begin position="1"/>
        <end position="149"/>
    </location>
</feature>
<gene>
    <name evidence="1" type="primary">rplM</name>
    <name evidence="1" type="synonym">rpl13</name>
    <name type="ordered locus">Cyan7425_1319</name>
</gene>
<protein>
    <recommendedName>
        <fullName evidence="1">Large ribosomal subunit protein uL13</fullName>
    </recommendedName>
    <alternativeName>
        <fullName evidence="2">50S ribosomal protein L13</fullName>
    </alternativeName>
</protein>
<comment type="function">
    <text evidence="1">This protein is one of the early assembly proteins of the 50S ribosomal subunit, although it is not seen to bind rRNA by itself. It is important during the early stages of 50S assembly.</text>
</comment>
<comment type="subunit">
    <text evidence="1">Part of the 50S ribosomal subunit.</text>
</comment>
<comment type="similarity">
    <text evidence="1">Belongs to the universal ribosomal protein uL13 family.</text>
</comment>
<dbReference type="EMBL" id="CP001344">
    <property type="protein sequence ID" value="ACL43696.1"/>
    <property type="molecule type" value="Genomic_DNA"/>
</dbReference>
<dbReference type="SMR" id="B8HMT1"/>
<dbReference type="STRING" id="395961.Cyan7425_1319"/>
<dbReference type="KEGG" id="cyn:Cyan7425_1319"/>
<dbReference type="eggNOG" id="COG0102">
    <property type="taxonomic scope" value="Bacteria"/>
</dbReference>
<dbReference type="HOGENOM" id="CLU_082184_2_2_3"/>
<dbReference type="OrthoDB" id="9801330at2"/>
<dbReference type="GO" id="GO:0022625">
    <property type="term" value="C:cytosolic large ribosomal subunit"/>
    <property type="evidence" value="ECO:0007669"/>
    <property type="project" value="TreeGrafter"/>
</dbReference>
<dbReference type="GO" id="GO:0003729">
    <property type="term" value="F:mRNA binding"/>
    <property type="evidence" value="ECO:0007669"/>
    <property type="project" value="TreeGrafter"/>
</dbReference>
<dbReference type="GO" id="GO:0003735">
    <property type="term" value="F:structural constituent of ribosome"/>
    <property type="evidence" value="ECO:0007669"/>
    <property type="project" value="InterPro"/>
</dbReference>
<dbReference type="GO" id="GO:0017148">
    <property type="term" value="P:negative regulation of translation"/>
    <property type="evidence" value="ECO:0007669"/>
    <property type="project" value="TreeGrafter"/>
</dbReference>
<dbReference type="GO" id="GO:0006412">
    <property type="term" value="P:translation"/>
    <property type="evidence" value="ECO:0007669"/>
    <property type="project" value="UniProtKB-UniRule"/>
</dbReference>
<dbReference type="CDD" id="cd00392">
    <property type="entry name" value="Ribosomal_L13"/>
    <property type="match status" value="1"/>
</dbReference>
<dbReference type="FunFam" id="3.90.1180.10:FF:000001">
    <property type="entry name" value="50S ribosomal protein L13"/>
    <property type="match status" value="1"/>
</dbReference>
<dbReference type="Gene3D" id="3.90.1180.10">
    <property type="entry name" value="Ribosomal protein L13"/>
    <property type="match status" value="1"/>
</dbReference>
<dbReference type="HAMAP" id="MF_01366">
    <property type="entry name" value="Ribosomal_uL13"/>
    <property type="match status" value="1"/>
</dbReference>
<dbReference type="InterPro" id="IPR005822">
    <property type="entry name" value="Ribosomal_uL13"/>
</dbReference>
<dbReference type="InterPro" id="IPR005823">
    <property type="entry name" value="Ribosomal_uL13_bac-type"/>
</dbReference>
<dbReference type="InterPro" id="IPR023563">
    <property type="entry name" value="Ribosomal_uL13_CS"/>
</dbReference>
<dbReference type="InterPro" id="IPR036899">
    <property type="entry name" value="Ribosomal_uL13_sf"/>
</dbReference>
<dbReference type="NCBIfam" id="TIGR01066">
    <property type="entry name" value="rplM_bact"/>
    <property type="match status" value="1"/>
</dbReference>
<dbReference type="PANTHER" id="PTHR11545:SF2">
    <property type="entry name" value="LARGE RIBOSOMAL SUBUNIT PROTEIN UL13M"/>
    <property type="match status" value="1"/>
</dbReference>
<dbReference type="PANTHER" id="PTHR11545">
    <property type="entry name" value="RIBOSOMAL PROTEIN L13"/>
    <property type="match status" value="1"/>
</dbReference>
<dbReference type="Pfam" id="PF00572">
    <property type="entry name" value="Ribosomal_L13"/>
    <property type="match status" value="1"/>
</dbReference>
<dbReference type="PIRSF" id="PIRSF002181">
    <property type="entry name" value="Ribosomal_L13"/>
    <property type="match status" value="1"/>
</dbReference>
<dbReference type="SUPFAM" id="SSF52161">
    <property type="entry name" value="Ribosomal protein L13"/>
    <property type="match status" value="1"/>
</dbReference>
<dbReference type="PROSITE" id="PS00783">
    <property type="entry name" value="RIBOSOMAL_L13"/>
    <property type="match status" value="1"/>
</dbReference>
<keyword id="KW-0687">Ribonucleoprotein</keyword>
<keyword id="KW-0689">Ribosomal protein</keyword>
<reference key="1">
    <citation type="journal article" date="2011" name="MBio">
        <title>Novel metabolic attributes of the genus Cyanothece, comprising a group of unicellular nitrogen-fixing Cyanobacteria.</title>
        <authorList>
            <person name="Bandyopadhyay A."/>
            <person name="Elvitigala T."/>
            <person name="Welsh E."/>
            <person name="Stockel J."/>
            <person name="Liberton M."/>
            <person name="Min H."/>
            <person name="Sherman L.A."/>
            <person name="Pakrasi H.B."/>
        </authorList>
    </citation>
    <scope>NUCLEOTIDE SEQUENCE [LARGE SCALE GENOMIC DNA]</scope>
    <source>
        <strain>PCC 7425 / ATCC 29141</strain>
    </source>
</reference>